<feature type="chain" id="PRO_0000217680" description="Uncharacterized protein slr0516">
    <location>
        <begin position="1"/>
        <end position="166"/>
    </location>
</feature>
<feature type="domain" description="Pentapeptide repeat 1">
    <location>
        <begin position="38"/>
        <end position="77"/>
    </location>
</feature>
<feature type="domain" description="Pentapeptide repeat 2">
    <location>
        <begin position="78"/>
        <end position="117"/>
    </location>
</feature>
<feature type="domain" description="Pentapeptide repeat 3">
    <location>
        <begin position="118"/>
        <end position="157"/>
    </location>
</feature>
<organism>
    <name type="scientific">Synechocystis sp. (strain ATCC 27184 / PCC 6803 / Kazusa)</name>
    <dbReference type="NCBI Taxonomy" id="1111708"/>
    <lineage>
        <taxon>Bacteria</taxon>
        <taxon>Bacillati</taxon>
        <taxon>Cyanobacteriota</taxon>
        <taxon>Cyanophyceae</taxon>
        <taxon>Synechococcales</taxon>
        <taxon>Merismopediaceae</taxon>
        <taxon>Synechocystis</taxon>
    </lineage>
</organism>
<proteinExistence type="predicted"/>
<keyword id="KW-1185">Reference proteome</keyword>
<keyword id="KW-0677">Repeat</keyword>
<gene>
    <name type="ordered locus">slr0516</name>
</gene>
<name>Y516_SYNY3</name>
<protein>
    <recommendedName>
        <fullName>Uncharacterized protein slr0516</fullName>
    </recommendedName>
</protein>
<accession>Q55837</accession>
<dbReference type="EMBL" id="BA000022">
    <property type="protein sequence ID" value="BAA10593.1"/>
    <property type="molecule type" value="Genomic_DNA"/>
</dbReference>
<dbReference type="PIR" id="S76649">
    <property type="entry name" value="S76649"/>
</dbReference>
<dbReference type="SMR" id="Q55837"/>
<dbReference type="STRING" id="1148.gene:10500097"/>
<dbReference type="PaxDb" id="1148-1001755"/>
<dbReference type="EnsemblBacteria" id="BAA10593">
    <property type="protein sequence ID" value="BAA10593"/>
    <property type="gene ID" value="BAA10593"/>
</dbReference>
<dbReference type="KEGG" id="syn:slr0516"/>
<dbReference type="eggNOG" id="COG1357">
    <property type="taxonomic scope" value="Bacteria"/>
</dbReference>
<dbReference type="InParanoid" id="Q55837"/>
<dbReference type="PhylomeDB" id="Q55837"/>
<dbReference type="Proteomes" id="UP000001425">
    <property type="component" value="Chromosome"/>
</dbReference>
<dbReference type="Gene3D" id="2.160.20.80">
    <property type="entry name" value="E3 ubiquitin-protein ligase SopA"/>
    <property type="match status" value="2"/>
</dbReference>
<dbReference type="InterPro" id="IPR001646">
    <property type="entry name" value="5peptide_repeat"/>
</dbReference>
<dbReference type="PANTHER" id="PTHR47485">
    <property type="entry name" value="THYLAKOID LUMENAL 17.4 KDA PROTEIN, CHLOROPLASTIC"/>
    <property type="match status" value="1"/>
</dbReference>
<dbReference type="PANTHER" id="PTHR47485:SF1">
    <property type="entry name" value="THYLAKOID LUMENAL 17.4 KDA PROTEIN, CHLOROPLASTIC"/>
    <property type="match status" value="1"/>
</dbReference>
<dbReference type="Pfam" id="PF00805">
    <property type="entry name" value="Pentapeptide"/>
    <property type="match status" value="3"/>
</dbReference>
<dbReference type="SUPFAM" id="SSF141571">
    <property type="entry name" value="Pentapeptide repeat-like"/>
    <property type="match status" value="1"/>
</dbReference>
<dbReference type="PROSITE" id="PS51257">
    <property type="entry name" value="PROKAR_LIPOPROTEIN"/>
    <property type="match status" value="1"/>
</dbReference>
<reference key="1">
    <citation type="journal article" date="1995" name="DNA Res.">
        <title>Sequence analysis of the genome of the unicellular cyanobacterium Synechocystis sp. strain PCC6803. I. Sequence features in the 1 Mb region from map positions 64% to 92% of the genome.</title>
        <authorList>
            <person name="Kaneko T."/>
            <person name="Tanaka A."/>
            <person name="Sato S."/>
            <person name="Kotani H."/>
            <person name="Sazuka T."/>
            <person name="Miyajima N."/>
            <person name="Sugiura M."/>
            <person name="Tabata S."/>
        </authorList>
    </citation>
    <scope>NUCLEOTIDE SEQUENCE [LARGE SCALE GENOMIC DNA]</scope>
    <source>
        <strain>ATCC 27184 / PCC 6803 / N-1</strain>
    </source>
</reference>
<reference key="2">
    <citation type="journal article" date="1996" name="DNA Res.">
        <title>Sequence analysis of the genome of the unicellular cyanobacterium Synechocystis sp. strain PCC6803. II. Sequence determination of the entire genome and assignment of potential protein-coding regions.</title>
        <authorList>
            <person name="Kaneko T."/>
            <person name="Sato S."/>
            <person name="Kotani H."/>
            <person name="Tanaka A."/>
            <person name="Asamizu E."/>
            <person name="Nakamura Y."/>
            <person name="Miyajima N."/>
            <person name="Hirosawa M."/>
            <person name="Sugiura M."/>
            <person name="Sasamoto S."/>
            <person name="Kimura T."/>
            <person name="Hosouchi T."/>
            <person name="Matsuno A."/>
            <person name="Muraki A."/>
            <person name="Nakazaki N."/>
            <person name="Naruo K."/>
            <person name="Okumura S."/>
            <person name="Shimpo S."/>
            <person name="Takeuchi C."/>
            <person name="Wada T."/>
            <person name="Watanabe A."/>
            <person name="Yamada M."/>
            <person name="Yasuda M."/>
            <person name="Tabata S."/>
        </authorList>
    </citation>
    <scope>NUCLEOTIDE SEQUENCE [LARGE SCALE GENOMIC DNA]</scope>
    <source>
        <strain>ATCC 27184 / PCC 6803 / Kazusa</strain>
    </source>
</reference>
<sequence>MNNKKLSLTLPLVGILALTACNQPKEEIDPLSQLREKGECLDCNLAGADLREFNLENARLNRSDLSGANLSGVNLRRALLDRANLTGANLSETDLTEAALTEANLAGADLSGANLERSFLRDVDLTGANLKGANLAWANLTAANLTDVDLEEAEFWETTMPDGSRR</sequence>